<protein>
    <recommendedName>
        <fullName evidence="1">3-deoxy-manno-octulosonate cytidylyltransferase</fullName>
        <ecNumber evidence="1">2.7.7.38</ecNumber>
    </recommendedName>
    <alternativeName>
        <fullName evidence="1">CMP-2-keto-3-deoxyoctulosonic acid synthase</fullName>
        <shortName evidence="1">CKS</shortName>
        <shortName evidence="1">CMP-KDO synthase</shortName>
    </alternativeName>
</protein>
<sequence>MSFVVIIPARYASTRLPGKPLVDINGKPMIVHVLERARESGAERIIVATDHEDVARAVEAAGGEVCMTRADHQSGTERLAEVVEKCAFSDDTVIVNVQGDEPMIPATIIRQVADNLAQRQVGMATLAVPIHNAEEAFNPNAVKVVLDAEGYALYFSRATIPWDRDRFAEGLETVGDNFLRHLGIYGYRAGFIRRYVNWQPSPLEHIEMLEQLRVLWYGEKIHVAVAQEVPGTGVDTPEDLERVRAEMR</sequence>
<feature type="initiator methionine" description="Removed">
    <location>
        <position position="1"/>
    </location>
</feature>
<feature type="chain" id="PRO_0000188501" description="3-deoxy-manno-octulosonate cytidylyltransferase">
    <location>
        <begin position="2"/>
        <end position="248"/>
    </location>
</feature>
<feature type="strand" evidence="2">
    <location>
        <begin position="4"/>
        <end position="8"/>
    </location>
</feature>
<feature type="strand" evidence="2">
    <location>
        <begin position="14"/>
        <end position="16"/>
    </location>
</feature>
<feature type="helix" evidence="2">
    <location>
        <begin position="19"/>
        <end position="21"/>
    </location>
</feature>
<feature type="strand" evidence="3">
    <location>
        <begin position="23"/>
        <end position="28"/>
    </location>
</feature>
<feature type="helix" evidence="2">
    <location>
        <begin position="29"/>
        <end position="39"/>
    </location>
</feature>
<feature type="strand" evidence="2">
    <location>
        <begin position="43"/>
        <end position="50"/>
    </location>
</feature>
<feature type="helix" evidence="2">
    <location>
        <begin position="52"/>
        <end position="60"/>
    </location>
</feature>
<feature type="strand" evidence="2">
    <location>
        <begin position="64"/>
        <end position="67"/>
    </location>
</feature>
<feature type="helix" evidence="2">
    <location>
        <begin position="75"/>
        <end position="86"/>
    </location>
</feature>
<feature type="strand" evidence="2">
    <location>
        <begin position="93"/>
        <end position="97"/>
    </location>
</feature>
<feature type="helix" evidence="2">
    <location>
        <begin position="106"/>
        <end position="117"/>
    </location>
</feature>
<feature type="strand" evidence="2">
    <location>
        <begin position="122"/>
        <end position="129"/>
    </location>
</feature>
<feature type="helix" evidence="2">
    <location>
        <begin position="133"/>
        <end position="136"/>
    </location>
</feature>
<feature type="strand" evidence="2">
    <location>
        <begin position="143"/>
        <end position="146"/>
    </location>
</feature>
<feature type="strand" evidence="2">
    <location>
        <begin position="150"/>
        <end position="158"/>
    </location>
</feature>
<feature type="helix" evidence="2">
    <location>
        <begin position="164"/>
        <end position="169"/>
    </location>
</feature>
<feature type="strand" evidence="2">
    <location>
        <begin position="179"/>
        <end position="181"/>
    </location>
</feature>
<feature type="strand" evidence="2">
    <location>
        <begin position="183"/>
        <end position="188"/>
    </location>
</feature>
<feature type="helix" evidence="2">
    <location>
        <begin position="189"/>
        <end position="197"/>
    </location>
</feature>
<feature type="helix" evidence="2">
    <location>
        <begin position="202"/>
        <end position="207"/>
    </location>
</feature>
<feature type="helix" evidence="2">
    <location>
        <begin position="212"/>
        <end position="216"/>
    </location>
</feature>
<feature type="strand" evidence="2">
    <location>
        <begin position="221"/>
        <end position="225"/>
    </location>
</feature>
<feature type="helix" evidence="2">
    <location>
        <begin position="237"/>
        <end position="246"/>
    </location>
</feature>
<organism>
    <name type="scientific">Escherichia coli (strain K12)</name>
    <dbReference type="NCBI Taxonomy" id="83333"/>
    <lineage>
        <taxon>Bacteria</taxon>
        <taxon>Pseudomonadati</taxon>
        <taxon>Pseudomonadota</taxon>
        <taxon>Gammaproteobacteria</taxon>
        <taxon>Enterobacterales</taxon>
        <taxon>Enterobacteriaceae</taxon>
        <taxon>Escherichia</taxon>
    </lineage>
</organism>
<reference key="1">
    <citation type="journal article" date="1986" name="J. Biol. Chem.">
        <title>Primary structure of CTP:CMP-3-deoxy-D-manno-octulosonate cytidylyltransferase (CMP-KDO synthetase) from Escherichia coli.</title>
        <authorList>
            <person name="Goldman R.C."/>
            <person name="Bolling T.J."/>
            <person name="Kohlbrenner W.E."/>
            <person name="Kim Y."/>
            <person name="Fox J.L."/>
        </authorList>
    </citation>
    <scope>NUCLEOTIDE SEQUENCE [GENOMIC DNA]</scope>
    <scope>PARTIAL PROTEIN SEQUENCE</scope>
    <source>
        <strain>K12</strain>
    </source>
</reference>
<reference key="2">
    <citation type="journal article" date="1996" name="DNA Res.">
        <title>A 718-kb DNA sequence of the Escherichia coli K-12 genome corresponding to the 12.7-28.0 min region on the linkage map.</title>
        <authorList>
            <person name="Oshima T."/>
            <person name="Aiba H."/>
            <person name="Baba T."/>
            <person name="Fujita K."/>
            <person name="Hayashi K."/>
            <person name="Honjo A."/>
            <person name="Ikemoto K."/>
            <person name="Inada T."/>
            <person name="Itoh T."/>
            <person name="Kajihara M."/>
            <person name="Kanai K."/>
            <person name="Kashimoto K."/>
            <person name="Kimura S."/>
            <person name="Kitagawa M."/>
            <person name="Makino K."/>
            <person name="Masuda S."/>
            <person name="Miki T."/>
            <person name="Mizobuchi K."/>
            <person name="Mori H."/>
            <person name="Motomura K."/>
            <person name="Nakamura Y."/>
            <person name="Nashimoto H."/>
            <person name="Nishio Y."/>
            <person name="Saito N."/>
            <person name="Sampei G."/>
            <person name="Seki Y."/>
            <person name="Tagami H."/>
            <person name="Takemoto K."/>
            <person name="Wada C."/>
            <person name="Yamamoto Y."/>
            <person name="Yano M."/>
            <person name="Horiuchi T."/>
        </authorList>
    </citation>
    <scope>NUCLEOTIDE SEQUENCE [LARGE SCALE GENOMIC DNA]</scope>
    <source>
        <strain>K12 / W3110 / ATCC 27325 / DSM 5911</strain>
    </source>
</reference>
<reference key="3">
    <citation type="journal article" date="1997" name="Science">
        <title>The complete genome sequence of Escherichia coli K-12.</title>
        <authorList>
            <person name="Blattner F.R."/>
            <person name="Plunkett G. III"/>
            <person name="Bloch C.A."/>
            <person name="Perna N.T."/>
            <person name="Burland V."/>
            <person name="Riley M."/>
            <person name="Collado-Vides J."/>
            <person name="Glasner J.D."/>
            <person name="Rode C.K."/>
            <person name="Mayhew G.F."/>
            <person name="Gregor J."/>
            <person name="Davis N.W."/>
            <person name="Kirkpatrick H.A."/>
            <person name="Goeden M.A."/>
            <person name="Rose D.J."/>
            <person name="Mau B."/>
            <person name="Shao Y."/>
        </authorList>
    </citation>
    <scope>NUCLEOTIDE SEQUENCE [LARGE SCALE GENOMIC DNA]</scope>
    <source>
        <strain>K12 / MG1655 / ATCC 47076</strain>
    </source>
</reference>
<reference key="4">
    <citation type="journal article" date="2006" name="Mol. Syst. Biol.">
        <title>Highly accurate genome sequences of Escherichia coli K-12 strains MG1655 and W3110.</title>
        <authorList>
            <person name="Hayashi K."/>
            <person name="Morooka N."/>
            <person name="Yamamoto Y."/>
            <person name="Fujita K."/>
            <person name="Isono K."/>
            <person name="Choi S."/>
            <person name="Ohtsubo E."/>
            <person name="Baba T."/>
            <person name="Wanner B.L."/>
            <person name="Mori H."/>
            <person name="Horiuchi T."/>
        </authorList>
    </citation>
    <scope>NUCLEOTIDE SEQUENCE [LARGE SCALE GENOMIC DNA]</scope>
    <source>
        <strain>K12 / W3110 / ATCC 27325 / DSM 5911</strain>
    </source>
</reference>
<reference key="5">
    <citation type="journal article" date="1997" name="Electrophoresis">
        <title>Escherichia coli proteome analysis using the gene-protein database.</title>
        <authorList>
            <person name="VanBogelen R.A."/>
            <person name="Abshire K.Z."/>
            <person name="Moldover B."/>
            <person name="Olson E.R."/>
            <person name="Neidhardt F.C."/>
        </authorList>
    </citation>
    <scope>IDENTIFICATION BY 2D-GEL</scope>
</reference>
<evidence type="ECO:0000255" key="1">
    <source>
        <dbReference type="HAMAP-Rule" id="MF_00057"/>
    </source>
</evidence>
<evidence type="ECO:0007829" key="2">
    <source>
        <dbReference type="PDB" id="3K8D"/>
    </source>
</evidence>
<evidence type="ECO:0007829" key="3">
    <source>
        <dbReference type="PDB" id="3K8E"/>
    </source>
</evidence>
<name>KDSB_ECOLI</name>
<comment type="function">
    <text evidence="1">Activates KDO (a required 8-carbon sugar) for incorporation into bacterial lipopolysaccharide in Gram-negative bacteria.</text>
</comment>
<comment type="catalytic activity">
    <reaction evidence="1">
        <text>3-deoxy-alpha-D-manno-oct-2-ulosonate + CTP = CMP-3-deoxy-beta-D-manno-octulosonate + diphosphate</text>
        <dbReference type="Rhea" id="RHEA:23448"/>
        <dbReference type="ChEBI" id="CHEBI:33019"/>
        <dbReference type="ChEBI" id="CHEBI:37563"/>
        <dbReference type="ChEBI" id="CHEBI:85986"/>
        <dbReference type="ChEBI" id="CHEBI:85987"/>
        <dbReference type="EC" id="2.7.7.38"/>
    </reaction>
</comment>
<comment type="cofactor">
    <cofactor>
        <name>Mg(2+)</name>
        <dbReference type="ChEBI" id="CHEBI:18420"/>
    </cofactor>
</comment>
<comment type="pathway">
    <text evidence="1">Nucleotide-sugar biosynthesis; CMP-3-deoxy-D-manno-octulosonate biosynthesis; CMP-3-deoxy-D-manno-octulosonate from 3-deoxy-D-manno-octulosonate and CTP: step 1/1.</text>
</comment>
<comment type="pathway">
    <text evidence="1">Bacterial outer membrane biogenesis; lipopolysaccharide biosynthesis.</text>
</comment>
<comment type="interaction">
    <interactant intactId="EBI-544810">
        <id>P04951</id>
    </interactant>
    <interactant intactId="EBI-544803">
        <id>P67430</id>
        <label>nemR</label>
    </interactant>
    <organismsDiffer>false</organismsDiffer>
    <experiments>3</experiments>
</comment>
<comment type="interaction">
    <interactant intactId="EBI-544810">
        <id>P04951</id>
    </interactant>
    <interactant intactId="EBI-1121539">
        <id>P0ACU2</id>
        <label>rutR</label>
    </interactant>
    <organismsDiffer>false</organismsDiffer>
    <experiments>2</experiments>
</comment>
<comment type="interaction">
    <interactant intactId="EBI-544810">
        <id>P04951</id>
    </interactant>
    <interactant intactId="EBI-301077">
        <id>P0CE47</id>
        <label>tufA</label>
    </interactant>
    <organismsDiffer>false</organismsDiffer>
    <experiments>2</experiments>
</comment>
<comment type="subcellular location">
    <subcellularLocation>
        <location evidence="1">Cytoplasm</location>
    </subcellularLocation>
</comment>
<comment type="similarity">
    <text evidence="1">Belongs to the KdsB family.</text>
</comment>
<gene>
    <name evidence="1" type="primary">kdsB</name>
    <name type="ordered locus">b0918</name>
    <name type="ordered locus">JW0901</name>
</gene>
<keyword id="KW-0002">3D-structure</keyword>
<keyword id="KW-0963">Cytoplasm</keyword>
<keyword id="KW-0903">Direct protein sequencing</keyword>
<keyword id="KW-0448">Lipopolysaccharide biosynthesis</keyword>
<keyword id="KW-0460">Magnesium</keyword>
<keyword id="KW-0548">Nucleotidyltransferase</keyword>
<keyword id="KW-1185">Reference proteome</keyword>
<keyword id="KW-0808">Transferase</keyword>
<dbReference type="EC" id="2.7.7.38" evidence="1"/>
<dbReference type="EMBL" id="J02614">
    <property type="protein sequence ID" value="AAA83877.1"/>
    <property type="molecule type" value="Genomic_DNA"/>
</dbReference>
<dbReference type="EMBL" id="U00096">
    <property type="protein sequence ID" value="AAC74004.1"/>
    <property type="molecule type" value="Genomic_DNA"/>
</dbReference>
<dbReference type="EMBL" id="AP009048">
    <property type="protein sequence ID" value="BAA35664.1"/>
    <property type="molecule type" value="Genomic_DNA"/>
</dbReference>
<dbReference type="PIR" id="A26322">
    <property type="entry name" value="A26322"/>
</dbReference>
<dbReference type="RefSeq" id="NP_415438.1">
    <property type="nucleotide sequence ID" value="NC_000913.3"/>
</dbReference>
<dbReference type="RefSeq" id="WP_000011603.1">
    <property type="nucleotide sequence ID" value="NZ_LN832404.1"/>
</dbReference>
<dbReference type="PDB" id="1VH1">
    <property type="method" value="X-ray"/>
    <property type="resolution" value="2.60 A"/>
    <property type="chains" value="A/B/C/D=2-248"/>
</dbReference>
<dbReference type="PDB" id="3K8D">
    <property type="method" value="X-ray"/>
    <property type="resolution" value="1.90 A"/>
    <property type="chains" value="A/B/C/D=1-248"/>
</dbReference>
<dbReference type="PDB" id="3K8E">
    <property type="method" value="X-ray"/>
    <property type="resolution" value="2.51 A"/>
    <property type="chains" value="A/B/C/D=1-248"/>
</dbReference>
<dbReference type="PDBsum" id="1VH1"/>
<dbReference type="PDBsum" id="3K8D"/>
<dbReference type="PDBsum" id="3K8E"/>
<dbReference type="SMR" id="P04951"/>
<dbReference type="BioGRID" id="4260010">
    <property type="interactions" value="230"/>
</dbReference>
<dbReference type="BioGRID" id="849913">
    <property type="interactions" value="2"/>
</dbReference>
<dbReference type="DIP" id="DIP-10066N"/>
<dbReference type="FunCoup" id="P04951">
    <property type="interactions" value="576"/>
</dbReference>
<dbReference type="IntAct" id="P04951">
    <property type="interactions" value="20"/>
</dbReference>
<dbReference type="STRING" id="511145.b0918"/>
<dbReference type="jPOST" id="P04951"/>
<dbReference type="PaxDb" id="511145-b0918"/>
<dbReference type="EnsemblBacteria" id="AAC74004">
    <property type="protein sequence ID" value="AAC74004"/>
    <property type="gene ID" value="b0918"/>
</dbReference>
<dbReference type="GeneID" id="945539"/>
<dbReference type="KEGG" id="ecj:JW0901"/>
<dbReference type="KEGG" id="eco:b0918"/>
<dbReference type="KEGG" id="ecoc:C3026_05650"/>
<dbReference type="PATRIC" id="fig|1411691.4.peg.1358"/>
<dbReference type="EchoBASE" id="EB0514"/>
<dbReference type="eggNOG" id="COG1212">
    <property type="taxonomic scope" value="Bacteria"/>
</dbReference>
<dbReference type="HOGENOM" id="CLU_065038_1_0_6"/>
<dbReference type="InParanoid" id="P04951"/>
<dbReference type="OMA" id="FMATCAK"/>
<dbReference type="OrthoDB" id="9815559at2"/>
<dbReference type="PhylomeDB" id="P04951"/>
<dbReference type="BioCyc" id="EcoCyc:CPM-KDOSYNTH-MONOMER"/>
<dbReference type="BioCyc" id="MetaCyc:CPM-KDOSYNTH-MONOMER"/>
<dbReference type="BRENDA" id="2.7.7.38">
    <property type="organism ID" value="2026"/>
</dbReference>
<dbReference type="SABIO-RK" id="P04951"/>
<dbReference type="UniPathway" id="UPA00030"/>
<dbReference type="UniPathway" id="UPA00358">
    <property type="reaction ID" value="UER00476"/>
</dbReference>
<dbReference type="EvolutionaryTrace" id="P04951"/>
<dbReference type="PRO" id="PR:P04951"/>
<dbReference type="Proteomes" id="UP000000625">
    <property type="component" value="Chromosome"/>
</dbReference>
<dbReference type="GO" id="GO:0005829">
    <property type="term" value="C:cytosol"/>
    <property type="evidence" value="ECO:0000314"/>
    <property type="project" value="EcoCyc"/>
</dbReference>
<dbReference type="GO" id="GO:0008690">
    <property type="term" value="F:3-deoxy-manno-octulosonate cytidylyltransferase activity"/>
    <property type="evidence" value="ECO:0000314"/>
    <property type="project" value="EcoCyc"/>
</dbReference>
<dbReference type="GO" id="GO:0000287">
    <property type="term" value="F:magnesium ion binding"/>
    <property type="evidence" value="ECO:0000314"/>
    <property type="project" value="EcoCyc"/>
</dbReference>
<dbReference type="GO" id="GO:0033468">
    <property type="term" value="P:CMP-keto-3-deoxy-D-manno-octulosonic acid biosynthetic process"/>
    <property type="evidence" value="ECO:0007669"/>
    <property type="project" value="UniProtKB-UniRule"/>
</dbReference>
<dbReference type="GO" id="GO:0019294">
    <property type="term" value="P:keto-3-deoxy-D-manno-octulosonic acid biosynthetic process"/>
    <property type="evidence" value="ECO:0000314"/>
    <property type="project" value="EcoCyc"/>
</dbReference>
<dbReference type="CDD" id="cd02517">
    <property type="entry name" value="CMP-KDO-Synthetase"/>
    <property type="match status" value="1"/>
</dbReference>
<dbReference type="FunFam" id="3.90.550.10:FF:000011">
    <property type="entry name" value="3-deoxy-manno-octulosonate cytidylyltransferase"/>
    <property type="match status" value="1"/>
</dbReference>
<dbReference type="Gene3D" id="3.90.550.10">
    <property type="entry name" value="Spore Coat Polysaccharide Biosynthesis Protein SpsA, Chain A"/>
    <property type="match status" value="1"/>
</dbReference>
<dbReference type="HAMAP" id="MF_00057">
    <property type="entry name" value="KdsB"/>
    <property type="match status" value="1"/>
</dbReference>
<dbReference type="InterPro" id="IPR003329">
    <property type="entry name" value="Cytidylyl_trans"/>
</dbReference>
<dbReference type="InterPro" id="IPR004528">
    <property type="entry name" value="KdsB"/>
</dbReference>
<dbReference type="InterPro" id="IPR029044">
    <property type="entry name" value="Nucleotide-diphossugar_trans"/>
</dbReference>
<dbReference type="NCBIfam" id="TIGR00466">
    <property type="entry name" value="kdsB"/>
    <property type="match status" value="1"/>
</dbReference>
<dbReference type="NCBIfam" id="NF003950">
    <property type="entry name" value="PRK05450.1-3"/>
    <property type="match status" value="1"/>
</dbReference>
<dbReference type="NCBIfam" id="NF003952">
    <property type="entry name" value="PRK05450.1-5"/>
    <property type="match status" value="1"/>
</dbReference>
<dbReference type="NCBIfam" id="NF009905">
    <property type="entry name" value="PRK13368.1"/>
    <property type="match status" value="1"/>
</dbReference>
<dbReference type="PANTHER" id="PTHR42866">
    <property type="entry name" value="3-DEOXY-MANNO-OCTULOSONATE CYTIDYLYLTRANSFERASE"/>
    <property type="match status" value="1"/>
</dbReference>
<dbReference type="PANTHER" id="PTHR42866:SF2">
    <property type="entry name" value="3-DEOXY-MANNO-OCTULOSONATE CYTIDYLYLTRANSFERASE, MITOCHONDRIAL"/>
    <property type="match status" value="1"/>
</dbReference>
<dbReference type="Pfam" id="PF02348">
    <property type="entry name" value="CTP_transf_3"/>
    <property type="match status" value="1"/>
</dbReference>
<dbReference type="SUPFAM" id="SSF53448">
    <property type="entry name" value="Nucleotide-diphospho-sugar transferases"/>
    <property type="match status" value="1"/>
</dbReference>
<accession>P04951</accession>
<proteinExistence type="evidence at protein level"/>